<organism>
    <name type="scientific">Canis lupus familiaris</name>
    <name type="common">Dog</name>
    <name type="synonym">Canis familiaris</name>
    <dbReference type="NCBI Taxonomy" id="9615"/>
    <lineage>
        <taxon>Eukaryota</taxon>
        <taxon>Metazoa</taxon>
        <taxon>Chordata</taxon>
        <taxon>Craniata</taxon>
        <taxon>Vertebrata</taxon>
        <taxon>Euteleostomi</taxon>
        <taxon>Mammalia</taxon>
        <taxon>Eutheria</taxon>
        <taxon>Laurasiatheria</taxon>
        <taxon>Carnivora</taxon>
        <taxon>Caniformia</taxon>
        <taxon>Canidae</taxon>
        <taxon>Canis</taxon>
    </lineage>
</organism>
<gene>
    <name type="primary">RHBDF2</name>
    <name type="synonym">RHBDL6</name>
</gene>
<evidence type="ECO:0000250" key="1">
    <source>
        <dbReference type="UniProtKB" id="Q6PJF5"/>
    </source>
</evidence>
<evidence type="ECO:0000250" key="2">
    <source>
        <dbReference type="UniProtKB" id="Q80WQ6"/>
    </source>
</evidence>
<evidence type="ECO:0000255" key="3"/>
<evidence type="ECO:0000256" key="4">
    <source>
        <dbReference type="SAM" id="MobiDB-lite"/>
    </source>
</evidence>
<evidence type="ECO:0000269" key="5">
    <source>
    </source>
</evidence>
<evidence type="ECO:0000305" key="6"/>
<keyword id="KW-1003">Cell membrane</keyword>
<keyword id="KW-0256">Endoplasmic reticulum</keyword>
<keyword id="KW-0340">Growth factor binding</keyword>
<keyword id="KW-0472">Membrane</keyword>
<keyword id="KW-0597">Phosphoprotein</keyword>
<keyword id="KW-0653">Protein transport</keyword>
<keyword id="KW-1185">Reference proteome</keyword>
<keyword id="KW-0812">Transmembrane</keyword>
<keyword id="KW-1133">Transmembrane helix</keyword>
<keyword id="KW-0813">Transport</keyword>
<dbReference type="EMBL" id="DQ336163">
    <property type="protein sequence ID" value="ABC74872.1"/>
    <property type="molecule type" value="mRNA"/>
</dbReference>
<dbReference type="RefSeq" id="NP_001070906.1">
    <property type="nucleotide sequence ID" value="NM_001077438.1"/>
</dbReference>
<dbReference type="RefSeq" id="XP_005624022.1">
    <property type="nucleotide sequence ID" value="XM_005623965.2"/>
</dbReference>
<dbReference type="RefSeq" id="XP_013971670.1">
    <property type="nucleotide sequence ID" value="XM_014116195.1"/>
</dbReference>
<dbReference type="RefSeq" id="XP_038530969.1">
    <property type="nucleotide sequence ID" value="XM_038675041.1"/>
</dbReference>
<dbReference type="SMR" id="Q00M95"/>
<dbReference type="FunCoup" id="Q00M95">
    <property type="interactions" value="31"/>
</dbReference>
<dbReference type="STRING" id="9615.ENSCAFP00000047053"/>
<dbReference type="MEROPS" id="S54.953"/>
<dbReference type="PaxDb" id="9612-ENSCAFP00000007595"/>
<dbReference type="Ensembl" id="ENSCAFT00030002732.1">
    <property type="protein sequence ID" value="ENSCAFP00030002436.1"/>
    <property type="gene ID" value="ENSCAFG00030001522.1"/>
</dbReference>
<dbReference type="GeneID" id="483332"/>
<dbReference type="KEGG" id="cfa:483332"/>
<dbReference type="CTD" id="79651"/>
<dbReference type="eggNOG" id="KOG2290">
    <property type="taxonomic scope" value="Eukaryota"/>
</dbReference>
<dbReference type="HOGENOM" id="CLU_011531_1_1_1"/>
<dbReference type="InParanoid" id="Q00M95"/>
<dbReference type="OMA" id="FTSHFCE"/>
<dbReference type="OrthoDB" id="2146116at2759"/>
<dbReference type="TreeFam" id="TF312988"/>
<dbReference type="Proteomes" id="UP000002254">
    <property type="component" value="Unplaced"/>
</dbReference>
<dbReference type="Proteomes" id="UP000694429">
    <property type="component" value="Chromosome 9"/>
</dbReference>
<dbReference type="Proteomes" id="UP000694542">
    <property type="component" value="Unplaced"/>
</dbReference>
<dbReference type="Proteomes" id="UP000805418">
    <property type="component" value="Unplaced"/>
</dbReference>
<dbReference type="GO" id="GO:0005789">
    <property type="term" value="C:endoplasmic reticulum membrane"/>
    <property type="evidence" value="ECO:0000250"/>
    <property type="project" value="UniProtKB"/>
</dbReference>
<dbReference type="GO" id="GO:0005886">
    <property type="term" value="C:plasma membrane"/>
    <property type="evidence" value="ECO:0007669"/>
    <property type="project" value="UniProtKB-SubCell"/>
</dbReference>
<dbReference type="GO" id="GO:0019838">
    <property type="term" value="F:growth factor binding"/>
    <property type="evidence" value="ECO:0007669"/>
    <property type="project" value="UniProtKB-KW"/>
</dbReference>
<dbReference type="GO" id="GO:0050709">
    <property type="term" value="P:negative regulation of protein secretion"/>
    <property type="evidence" value="ECO:0000250"/>
    <property type="project" value="UniProtKB"/>
</dbReference>
<dbReference type="GO" id="GO:0015031">
    <property type="term" value="P:protein transport"/>
    <property type="evidence" value="ECO:0007669"/>
    <property type="project" value="UniProtKB-KW"/>
</dbReference>
<dbReference type="GO" id="GO:0042058">
    <property type="term" value="P:regulation of epidermal growth factor receptor signaling pathway"/>
    <property type="evidence" value="ECO:0000318"/>
    <property type="project" value="GO_Central"/>
</dbReference>
<dbReference type="GO" id="GO:0050708">
    <property type="term" value="P:regulation of protein secretion"/>
    <property type="evidence" value="ECO:0000318"/>
    <property type="project" value="GO_Central"/>
</dbReference>
<dbReference type="FunFam" id="1.20.1540.10:FF:000001">
    <property type="entry name" value="Putative inactive rhomboid protein 1"/>
    <property type="match status" value="1"/>
</dbReference>
<dbReference type="Gene3D" id="1.20.1540.10">
    <property type="entry name" value="Rhomboid-like"/>
    <property type="match status" value="1"/>
</dbReference>
<dbReference type="InterPro" id="IPR051512">
    <property type="entry name" value="Inactive_Rhomboid"/>
</dbReference>
<dbReference type="InterPro" id="IPR022241">
    <property type="entry name" value="iRhom1_2_N"/>
</dbReference>
<dbReference type="InterPro" id="IPR022764">
    <property type="entry name" value="Peptidase_S54_rhomboid_dom"/>
</dbReference>
<dbReference type="InterPro" id="IPR035952">
    <property type="entry name" value="Rhomboid-like_sf"/>
</dbReference>
<dbReference type="PANTHER" id="PTHR45965">
    <property type="entry name" value="INACTIVE RHOMBOID PROTEIN"/>
    <property type="match status" value="1"/>
</dbReference>
<dbReference type="PANTHER" id="PTHR45965:SF2">
    <property type="entry name" value="INACTIVE RHOMBOID PROTEIN 2"/>
    <property type="match status" value="1"/>
</dbReference>
<dbReference type="Pfam" id="PF12595">
    <property type="entry name" value="iRhom1-2_N"/>
    <property type="match status" value="1"/>
</dbReference>
<dbReference type="Pfam" id="PF01694">
    <property type="entry name" value="Rhomboid"/>
    <property type="match status" value="1"/>
</dbReference>
<dbReference type="SUPFAM" id="SSF144091">
    <property type="entry name" value="Rhomboid-like"/>
    <property type="match status" value="1"/>
</dbReference>
<name>RHDF2_CANLF</name>
<sequence>MDSTDKNGESVSSVSSSRLQSRKPPNLSITIPPPEASAPGEQASMLPQRPRNPAYMKSVSLQEQRGRWQEGSSEKRPGFRRQASLSQSIRKGTAQWFGVSGDWEAKRQHWQRRSLHHCSVRYGRLKASCQRDLELPSQEVPSFQGTESPKPCKMPKIVDPLARGRAFRHPDEVDRPHAPHPPLTPGVLSLTSFTSVRSGHSHLPRRKRMSVAHMSFQAAAALLKGRSVLDATGQRCRVVKRSFAYPSFLEEDVVDGADTFDSSFFSKEEMSSMPDDVFESPPLSASYFRGIPRSASPVSPDGVQIPLKEYGRPPVAGTRRGKRIASKVKHFAFDRKKRHYGLGVVGNWLNRSYRRSISSTVQRQLESFDSHRPYFTYWLTFVHIIITLLVICTYGIAPVGFAQHVTTQLVLRNKGVYESVKYIQQENFWIGPSSIDLIHLGAKFSPCIRKDQQIEQLVLRERDLERDSGCCVQNDHSGCIQTQRKDCSETLATFVKWQDDTGPPMDKSDLGQKRTSGAVCHQDPRTCEEPASSGAHIWPDDITKWPICTEQAKSNRTGFLHMDCQIKGRPCCISTKGSCEITTREYCEFMHGYFHEEATLCSQVHCLDKVCGLLPFLNPEVPDQFYRLWLSLFLHAGVVHCLVSVVFQMTILRDLEKLAGWHRIAIIFILSGITGNLASAIFLPYRAEVGPAGSQFGLLACLFVELFQSWQLLERPWKAFLNLSAIVLFLFICGLLPWIDNIAHIFGFLSGLLLAFAFLPYITFGTSDKYRKRALILVSLLVFAGLFASLVIWLYVYPINWPWIEYLTCFPFTSRFCEKYELDQVLH</sequence>
<reference key="1">
    <citation type="journal article" date="2006" name="Genomics">
        <title>Linkage disequilibrium mapping in domestic dog breeds narrows the progressive rod-cone degeneration interval and identifies ancestral disease-transmitting chromosome.</title>
        <authorList>
            <person name="Goldstein O."/>
            <person name="Zangerl B."/>
            <person name="Pearce-Kelling S."/>
            <person name="Sidjanin D.J."/>
            <person name="Kijas J.W."/>
            <person name="Felix J."/>
            <person name="Acland G.M."/>
            <person name="Aguirre G.D."/>
        </authorList>
    </citation>
    <scope>NUCLEOTIDE SEQUENCE [MRNA]</scope>
    <scope>TISSUE SPECIFICITY</scope>
    <source>
        <tissue>Retina</tissue>
    </source>
</reference>
<comment type="function">
    <text evidence="2">Regulates ADAM17 protease, a sheddase of the epidermal growth factor (EGF) receptor ligands and TNF, thereby plays a role in sleep, cell survival, proliferation, migration and inflammation. Does not exhibit any protease activity on its own.</text>
</comment>
<comment type="subunit">
    <text evidence="1 2">Interacts with EGF (By similarity). Interacts (via cytoplasmic N-terminus) with FRMD8/iTAP; this interaction leads to mutual protein stabilization. Interacts with ADAM17/TACE (By similarity).</text>
</comment>
<comment type="subcellular location">
    <subcellularLocation>
        <location evidence="2">Endoplasmic reticulum membrane</location>
        <topology evidence="2">Multi-pass membrane protein</topology>
    </subcellularLocation>
    <subcellularLocation>
        <location evidence="1">Cell membrane</location>
    </subcellularLocation>
</comment>
<comment type="tissue specificity">
    <text evidence="5">Detected in retina and spleen.</text>
</comment>
<comment type="similarity">
    <text evidence="6">Belongs to the peptidase S54 family.</text>
</comment>
<feature type="chain" id="PRO_0000341937" description="Inactive rhomboid protein 2">
    <location>
        <begin position="1"/>
        <end position="827"/>
    </location>
</feature>
<feature type="topological domain" description="Cytoplasmic" evidence="3">
    <location>
        <begin position="1"/>
        <end position="380"/>
    </location>
</feature>
<feature type="transmembrane region" description="Helical" evidence="3">
    <location>
        <begin position="381"/>
        <end position="401"/>
    </location>
</feature>
<feature type="topological domain" description="Lumenal" evidence="3">
    <location>
        <begin position="402"/>
        <end position="631"/>
    </location>
</feature>
<feature type="transmembrane region" description="Helical" evidence="3">
    <location>
        <begin position="632"/>
        <end position="652"/>
    </location>
</feature>
<feature type="topological domain" description="Cytoplasmic" evidence="3">
    <location>
        <begin position="653"/>
        <end position="663"/>
    </location>
</feature>
<feature type="transmembrane region" description="Helical" evidence="3">
    <location>
        <begin position="664"/>
        <end position="684"/>
    </location>
</feature>
<feature type="topological domain" description="Lumenal" evidence="3">
    <location>
        <begin position="685"/>
        <end position="686"/>
    </location>
</feature>
<feature type="transmembrane region" description="Helical" evidence="3">
    <location>
        <begin position="687"/>
        <end position="707"/>
    </location>
</feature>
<feature type="topological domain" description="Cytoplasmic" evidence="3">
    <location>
        <begin position="708"/>
        <end position="718"/>
    </location>
</feature>
<feature type="transmembrane region" description="Helical" evidence="3">
    <location>
        <begin position="719"/>
        <end position="739"/>
    </location>
</feature>
<feature type="topological domain" description="Lumenal" evidence="3">
    <location>
        <begin position="740"/>
        <end position="744"/>
    </location>
</feature>
<feature type="transmembrane region" description="Helical" evidence="3">
    <location>
        <begin position="745"/>
        <end position="765"/>
    </location>
</feature>
<feature type="topological domain" description="Cytoplasmic" evidence="3">
    <location>
        <begin position="766"/>
        <end position="773"/>
    </location>
</feature>
<feature type="transmembrane region" description="Helical" evidence="3">
    <location>
        <begin position="774"/>
        <end position="794"/>
    </location>
</feature>
<feature type="topological domain" description="Lumenal" evidence="3">
    <location>
        <begin position="795"/>
        <end position="827"/>
    </location>
</feature>
<feature type="region of interest" description="Disordered" evidence="4">
    <location>
        <begin position="1"/>
        <end position="87"/>
    </location>
</feature>
<feature type="compositionally biased region" description="Basic and acidic residues" evidence="4">
    <location>
        <begin position="64"/>
        <end position="77"/>
    </location>
</feature>
<feature type="modified residue" description="Phosphoserine" evidence="1">
    <location>
        <position position="60"/>
    </location>
</feature>
<feature type="modified residue" description="Phosphoserine" evidence="1">
    <location>
        <position position="84"/>
    </location>
</feature>
<feature type="modified residue" description="Phosphoserine" evidence="2">
    <location>
        <position position="88"/>
    </location>
</feature>
<feature type="modified residue" description="Phosphoserine" evidence="2">
    <location>
        <position position="294"/>
    </location>
</feature>
<feature type="modified residue" description="Phosphoserine" evidence="1">
    <location>
        <position position="296"/>
    </location>
</feature>
<feature type="modified residue" description="Phosphoserine" evidence="1">
    <location>
        <position position="299"/>
    </location>
</feature>
<proteinExistence type="evidence at transcript level"/>
<accession>Q00M95</accession>
<protein>
    <recommendedName>
        <fullName>Inactive rhomboid protein 2</fullName>
        <shortName>iRhom2</shortName>
    </recommendedName>
    <alternativeName>
        <fullName>Rhomboid family member 2</fullName>
    </alternativeName>
    <alternativeName>
        <fullName>Rhomboid veinlet-like protein 6</fullName>
    </alternativeName>
</protein>